<sequence>MIKHFHFNKLSSGKKNNVPSPAKGVIQIKKSASQLTKGGAGHVPEYFVGIGTPISFYG</sequence>
<comment type="function">
    <text evidence="2 3 4 5 9 11">Peptide antibiotic that functions through inhibition of the bacterial DNA-dependent RNA polymerase (RNAP) (PubMed:11443089, PubMed:12401787). Inhibits transcription by binding deep within RNAP secondary channel, where it sterically blocks the folding of the trigger loop, which is essential for efficient catalysis (PubMed:15200952, PubMed:30626643). In addition, it also seems to restrict access of nucleotide substrates to the catalytic center, and shows a partially competitive mode of inhibition with them (PubMed:15200952, PubMed:30626643). Exhibits potent bacteriocidal activity against a range of Enterobacteriaceae, including several pathogenic E.coli, Salmonella and Shigella strains (PubMed:1429464). Also acts on the cytoplasmic membrane of Salmonella newport, producing alteration of membrane permeability and disruption of the subsequent gradient dissipation, which inhibits several processes essential for cell viability, such as oxygen consumption (PubMed:11731133). Induces bacterial filamentation in susceptible cells in a non-SOS-dependent way, but this phenotype may result from impaired transcription of genes coding for cell division proteins (PubMed:1429464).</text>
</comment>
<comment type="interaction">
    <interactant intactId="EBI-16100378">
        <id>Q9X2V7</id>
    </interactant>
    <interactant intactId="EBI-1116714">
        <id>P06971</id>
        <label>fhuA</label>
    </interactant>
    <organismsDiffer>true</organismsDiffer>
    <experiments>2</experiments>
</comment>
<comment type="subcellular location">
    <subcellularLocation>
        <location evidence="15">Secreted</location>
    </subcellularLocation>
</comment>
<comment type="induction">
    <text evidence="5">At the onset of stationary growth phase.</text>
</comment>
<comment type="mass spectrometry"/>
<comment type="mass spectrometry"/>
<comment type="caution">
    <text evidence="14">Was originally thought to have a head-to-tail cyclic structure, but actually has a threaded side chain-to-backbone ring structure that is penetrated by the C-terminal tail in a noose-like motif.</text>
</comment>
<comment type="online information" name="Protein Spotlight">
    <link uri="https://www.proteinspotlight.org/back_issues/072"/>
    <text>Entanglement - Issue 72 of July 2006</text>
</comment>
<accession>Q9X2V7</accession>
<protein>
    <recommendedName>
        <fullName evidence="12">Microcin J25</fullName>
        <shortName evidence="12">MccJ25</shortName>
    </recommendedName>
    <alternativeName>
        <fullName evidence="13">Class II lasso peptide</fullName>
    </alternativeName>
    <alternativeName>
        <fullName evidence="13">Ribosomally synthesized and post-translationally modified peptide</fullName>
        <shortName evidence="13">RiPP</shortName>
    </alternativeName>
</protein>
<dbReference type="EMBL" id="AF061787">
    <property type="protein sequence ID" value="AAD28494.1"/>
    <property type="molecule type" value="Genomic_DNA"/>
</dbReference>
<dbReference type="RefSeq" id="WP_001513516.1">
    <property type="nucleotide sequence ID" value="NZ_WVVR01000053.1"/>
</dbReference>
<dbReference type="RefSeq" id="YP_009071192.1">
    <property type="nucleotide sequence ID" value="NC_025179.1"/>
</dbReference>
<dbReference type="PDB" id="1PP5">
    <property type="method" value="NMR"/>
    <property type="chains" value="A=38-58"/>
</dbReference>
<dbReference type="PDB" id="1Q71">
    <property type="method" value="NMR"/>
    <property type="chains" value="A=38-58"/>
</dbReference>
<dbReference type="PDB" id="1S7P">
    <property type="method" value="NMR"/>
    <property type="chains" value="A=38-47, B=48-58"/>
</dbReference>
<dbReference type="PDB" id="2MMT">
    <property type="method" value="NMR"/>
    <property type="chains" value="A=38-58"/>
</dbReference>
<dbReference type="PDB" id="2MMW">
    <property type="method" value="NMR"/>
    <property type="chains" value="A=38-58"/>
</dbReference>
<dbReference type="PDB" id="4CU4">
    <property type="method" value="X-ray"/>
    <property type="resolution" value="2.30 A"/>
    <property type="chains" value="B=38-58"/>
</dbReference>
<dbReference type="PDB" id="6N60">
    <property type="method" value="X-ray"/>
    <property type="resolution" value="3.68 A"/>
    <property type="chains" value="M=38-58"/>
</dbReference>
<dbReference type="PDBsum" id="1PP5"/>
<dbReference type="PDBsum" id="1Q71"/>
<dbReference type="PDBsum" id="1S7P"/>
<dbReference type="PDBsum" id="2MMT"/>
<dbReference type="PDBsum" id="2MMW"/>
<dbReference type="PDBsum" id="4CU4"/>
<dbReference type="PDBsum" id="6N60"/>
<dbReference type="BMRB" id="Q9X2V7"/>
<dbReference type="PCDDB" id="Q9X2V7"/>
<dbReference type="SMR" id="Q9X2V7"/>
<dbReference type="DIP" id="DIP-60856N"/>
<dbReference type="IntAct" id="Q9X2V7">
    <property type="interactions" value="1"/>
</dbReference>
<dbReference type="TCDB" id="9.A.52.1.1">
    <property type="family name" value="the microcin j25 (microsin j25) family"/>
</dbReference>
<dbReference type="GeneID" id="83575962"/>
<dbReference type="EvolutionaryTrace" id="Q9X2V7"/>
<dbReference type="GO" id="GO:0005576">
    <property type="term" value="C:extracellular region"/>
    <property type="evidence" value="ECO:0007669"/>
    <property type="project" value="UniProtKB-SubCell"/>
</dbReference>
<dbReference type="GO" id="GO:0042742">
    <property type="term" value="P:defense response to bacterium"/>
    <property type="evidence" value="ECO:0007669"/>
    <property type="project" value="UniProtKB-KW"/>
</dbReference>
<dbReference type="GO" id="GO:0031640">
    <property type="term" value="P:killing of cells of another organism"/>
    <property type="evidence" value="ECO:0007669"/>
    <property type="project" value="UniProtKB-KW"/>
</dbReference>
<dbReference type="NCBIfam" id="NF033471">
    <property type="entry name" value="J25_fam_lasso"/>
    <property type="match status" value="1"/>
</dbReference>
<name>MCJA_ECOLX</name>
<gene>
    <name type="primary">mcjA</name>
</gene>
<organism>
    <name type="scientific">Escherichia coli</name>
    <dbReference type="NCBI Taxonomy" id="562"/>
    <lineage>
        <taxon>Bacteria</taxon>
        <taxon>Pseudomonadati</taxon>
        <taxon>Pseudomonadota</taxon>
        <taxon>Gammaproteobacteria</taxon>
        <taxon>Enterobacterales</taxon>
        <taxon>Enterobacteriaceae</taxon>
        <taxon>Escherichia</taxon>
    </lineage>
</organism>
<keyword id="KW-0002">3D-structure</keyword>
<keyword id="KW-0044">Antibiotic</keyword>
<keyword id="KW-0929">Antimicrobial</keyword>
<keyword id="KW-0078">Bacteriocin</keyword>
<keyword id="KW-0903">Direct protein sequencing</keyword>
<keyword id="KW-1017">Isopeptide bond</keyword>
<keyword id="KW-0614">Plasmid</keyword>
<keyword id="KW-0964">Secreted</keyword>
<feature type="propeptide" id="PRO_0000002774" evidence="1">
    <location>
        <begin position="1"/>
        <end position="37"/>
    </location>
</feature>
<feature type="peptide" id="PRO_0000002775" description="Microcin J25" evidence="1">
    <location>
        <begin position="38"/>
        <end position="58"/>
    </location>
</feature>
<feature type="site" description="Essential for permeation into bacteria" evidence="10">
    <location>
        <position position="41"/>
    </location>
</feature>
<feature type="site" description="Essential for permeation into bacteria" evidence="10">
    <location>
        <position position="44"/>
    </location>
</feature>
<feature type="site" description="Essential for permeation into bacteria and for RNAP inhibition" evidence="10">
    <location>
        <position position="46"/>
    </location>
</feature>
<feature type="site" description="Essential for permeation into bacteria" evidence="10">
    <location>
        <position position="47"/>
    </location>
</feature>
<feature type="site" description="Essential for permeation into bacteria" evidence="10">
    <location>
        <position position="56"/>
    </location>
</feature>
<feature type="site" description="Essential for permeation into bacteria" evidence="10">
    <location>
        <position position="57"/>
    </location>
</feature>
<feature type="cross-link" description="Isoglutamyl glycine isopeptide (Gly-Glu)" evidence="6 7 8">
    <location>
        <begin position="38"/>
        <end position="45"/>
    </location>
</feature>
<feature type="mutagenesis site" description="Loss of RNAP inhibition and loss of bacterial growth inhibition." evidence="10">
    <original>G</original>
    <variation>A</variation>
    <variation>C</variation>
    <variation>D</variation>
    <variation>E</variation>
    <variation>F</variation>
    <variation>G</variation>
    <variation>H</variation>
    <variation>I</variation>
    <variation>K</variation>
    <variation>L</variation>
    <variation>M</variation>
    <variation>N</variation>
    <variation>P</variation>
    <variation>Q</variation>
    <variation>R</variation>
    <variation>T</variation>
    <variation>V</variation>
    <variation>W</variation>
    <variation>Y</variation>
    <location>
        <position position="41"/>
    </location>
</feature>
<feature type="mutagenesis site" description="No change of RNAP inhibition but loss of bacterial growth inhibition." evidence="10">
    <original>G</original>
    <variation>S</variation>
    <location>
        <position position="41"/>
    </location>
</feature>
<feature type="mutagenesis site" description="No change of RNAP inhibition but loss of bacterial growth inhibition." evidence="10">
    <original>P</original>
    <variation>A</variation>
    <variation>L</variation>
    <variation>V</variation>
    <location>
        <position position="44"/>
    </location>
</feature>
<feature type="mutagenesis site" description="Loss of RNAP inhibition and loss of bacterial growth inhibition." evidence="10">
    <original>P</original>
    <variation>C</variation>
    <variation>D</variation>
    <variation>E</variation>
    <variation>F</variation>
    <variation>G</variation>
    <variation>H</variation>
    <variation>I</variation>
    <variation>K</variation>
    <variation>M</variation>
    <variation>N</variation>
    <variation>P</variation>
    <variation>Q</variation>
    <variation>R</variation>
    <variation>S</variation>
    <variation>T</variation>
    <variation>W</variation>
    <variation>Y</variation>
    <location>
        <position position="44"/>
    </location>
</feature>
<feature type="mutagenesis site" description="Loss of RNAP inhibition." evidence="10">
    <original>Y</original>
    <variation>A</variation>
    <variation>C</variation>
    <variation>D</variation>
    <variation>E</variation>
    <variation>F</variation>
    <variation>G</variation>
    <variation>H</variation>
    <variation>I</variation>
    <variation>K</variation>
    <variation>L</variation>
    <variation>M</variation>
    <variation>N</variation>
    <variation>P</variation>
    <variation>Q</variation>
    <variation>R</variation>
    <variation>S</variation>
    <variation>T</variation>
    <variation>V</variation>
    <variation>W</variation>
    <variation>Y</variation>
    <location>
        <position position="46"/>
    </location>
</feature>
<feature type="mutagenesis site" description="Loss of RNAP inhibition and loss of bacterial growth inhibition." evidence="10">
    <original>F</original>
    <variation>A</variation>
    <variation>C</variation>
    <variation>D</variation>
    <variation>E</variation>
    <variation>F</variation>
    <variation>G</variation>
    <variation>H</variation>
    <variation>K</variation>
    <variation>L</variation>
    <variation>N</variation>
    <variation>P</variation>
    <variation>Q</variation>
    <variation>T</variation>
    <variation>V</variation>
    <variation>Y</variation>
    <location>
        <position position="47"/>
    </location>
</feature>
<feature type="mutagenesis site" description="No change of RNAP inhibition but loss of bacterial growth inhibition." evidence="10">
    <original>F</original>
    <variation>I</variation>
    <variation>M</variation>
    <variation>R</variation>
    <variation>S</variation>
    <variation>W</variation>
    <location>
        <position position="47"/>
    </location>
</feature>
<feature type="mutagenesis site" description="Increase in bacterial growth inhibition." evidence="10">
    <original>I</original>
    <variation>A</variation>
    <variation>L</variation>
    <variation>M</variation>
    <variation>N</variation>
    <variation>P</variation>
    <variation>R</variation>
    <variation>T</variation>
    <location>
        <position position="50"/>
    </location>
</feature>
<feature type="mutagenesis site" description="Increase in bacterial growth inhibition." evidence="10">
    <original>T</original>
    <variation>A</variation>
    <variation>F</variation>
    <variation>H</variation>
    <variation>L</variation>
    <location>
        <position position="52"/>
    </location>
</feature>
<feature type="mutagenesis site" description="No change of RNAP inhibition but increase in permeation into bacterial cells and bacterial growth inhibition." evidence="10">
    <original>T</original>
    <variation>G</variation>
    <location>
        <position position="52"/>
    </location>
</feature>
<feature type="mutagenesis site" description="Loss of RNAP inhibition and loss of bacterial growth inhibition." evidence="10">
    <original>F</original>
    <variation>A</variation>
    <variation>C</variation>
    <variation>D</variation>
    <variation>E</variation>
    <variation>F</variation>
    <variation>G</variation>
    <variation>H</variation>
    <variation>I</variation>
    <variation>K</variation>
    <variation>L</variation>
    <variation>M</variation>
    <variation>N</variation>
    <variation>P</variation>
    <variation>Q</variation>
    <variation>R</variation>
    <variation>S</variation>
    <variation>T</variation>
    <variation>V</variation>
    <location>
        <position position="56"/>
    </location>
</feature>
<feature type="mutagenesis site" description="No change of RNAP inhibition but loss of bacterial growth inhibition." evidence="10">
    <original>F</original>
    <variation>W</variation>
    <variation>Y</variation>
    <location>
        <position position="56"/>
    </location>
</feature>
<feature type="mutagenesis site" description="Loss RNAP inhibition, and loss of bacterial growth inhibition." evidence="10">
    <original>Y</original>
    <variation>A</variation>
    <variation>C</variation>
    <variation>D</variation>
    <variation>E</variation>
    <variation>F</variation>
    <variation>G</variation>
    <variation>H</variation>
    <variation>I</variation>
    <variation>K</variation>
    <variation>L</variation>
    <variation>M</variation>
    <variation>N</variation>
    <variation>P</variation>
    <variation>Q</variation>
    <variation>R</variation>
    <variation>S</variation>
    <variation>T</variation>
    <variation>V</variation>
    <variation>W</variation>
    <variation>Y</variation>
    <location>
        <position position="57"/>
    </location>
</feature>
<feature type="mutagenesis site" description="No change of RNAP inhibition, and loss of bacterial growth inhibition." evidence="10">
    <original>Y</original>
    <variation>F</variation>
    <location>
        <position position="57"/>
    </location>
</feature>
<feature type="strand" evidence="17">
    <location>
        <begin position="39"/>
        <end position="44"/>
    </location>
</feature>
<feature type="strand" evidence="16">
    <location>
        <begin position="48"/>
        <end position="51"/>
    </location>
</feature>
<feature type="strand" evidence="16">
    <location>
        <begin position="55"/>
        <end position="57"/>
    </location>
</feature>
<reference key="1">
    <citation type="journal article" date="1999" name="J. Bacteriol.">
        <title>Sequence analysis of the four plasmid genes required to produce the circular peptide antibiotic microcin J25.</title>
        <authorList>
            <person name="Solbiati J.O."/>
            <person name="Ciaccio M."/>
            <person name="Farias R.N."/>
            <person name="Gonzalez-Pastor J.E."/>
            <person name="Moreno F."/>
            <person name="Salomon R.A."/>
        </authorList>
    </citation>
    <scope>NUCLEOTIDE SEQUENCE [GENOMIC DNA]</scope>
    <source>
        <strain>AY25</strain>
    </source>
</reference>
<reference key="2">
    <citation type="journal article" date="1999" name="Eur. J. Biochem.">
        <title>The cyclic structure of microcin J25, a 21-residue peptide antibiotic from Escherichia coli.</title>
        <authorList>
            <person name="Blond A."/>
            <person name="Peduzzi J."/>
            <person name="Goulard C."/>
            <person name="Chiuchiolo M.J."/>
            <person name="Barthelemy M."/>
            <person name="Prigent Y."/>
            <person name="Salomon R.A."/>
            <person name="Farias R.N."/>
            <person name="Moreno F."/>
            <person name="Rebuffat S."/>
        </authorList>
    </citation>
    <scope>PROTEIN SEQUENCE OF 38-58</scope>
    <scope>MASS SPECTROMETRY</scope>
</reference>
<reference key="3">
    <citation type="journal article" date="1992" name="J. Bacteriol.">
        <title>Microcin 25, a novel antimicrobial peptide produced by Escherichia coli.</title>
        <authorList>
            <person name="Salomon R.A."/>
            <person name="Farias R.N."/>
        </authorList>
    </citation>
    <scope>FUNCTION</scope>
</reference>
<reference key="4">
    <citation type="journal article" date="2001" name="FEMS Microbiol. Lett.">
        <title>The antibacterial action of microcin J25: evidence for disruption of cytoplasmic membrane energization in Salmonella newport.</title>
        <authorList>
            <person name="Rintoul M.R."/>
            <person name="de Arcuri B.F."/>
            <person name="Salomon R.A."/>
            <person name="Farias R.N."/>
            <person name="Morero R.D."/>
        </authorList>
    </citation>
    <scope>FUNCTION</scope>
</reference>
<reference key="5">
    <citation type="journal article" date="2001" name="J. Bacteriol.">
        <title>Escherichia coli RNA polymerase is the target of the cyclopeptide antibiotic microcin J25.</title>
        <authorList>
            <person name="Delgado M.A."/>
            <person name="Rintoul M.R."/>
            <person name="Farias R.N."/>
            <person name="Salomon R.A."/>
        </authorList>
    </citation>
    <scope>FUNCTION</scope>
</reference>
<reference key="6">
    <citation type="journal article" date="2002" name="J. Biol. Chem.">
        <title>Mutations of bacterial RNA polymerase leading to resistance to microcin J25.</title>
        <authorList>
            <person name="Yuzenkova J."/>
            <person name="Delgado M.A."/>
            <person name="Nechaev S."/>
            <person name="Savalia D."/>
            <person name="Epshtein V."/>
            <person name="Artsimovitch I."/>
            <person name="Mooney R.A."/>
            <person name="Landick R."/>
            <person name="Farias R.N."/>
            <person name="Salomon R.A."/>
            <person name="Severinov K."/>
        </authorList>
    </citation>
    <scope>FUNCTION</scope>
</reference>
<reference key="7">
    <citation type="journal article" date="2004" name="Mol. Cell">
        <title>Antibacterial peptide microcin J25 inhibits transcription by binding within and obstructing the RNA polymerase secondary channel.</title>
        <authorList>
            <person name="Mukhopadhyay J."/>
            <person name="Sineva E."/>
            <person name="Knight J."/>
            <person name="Levy R.M."/>
            <person name="Ebright R.H."/>
        </authorList>
    </citation>
    <scope>FUNCTION</scope>
</reference>
<reference key="8">
    <citation type="journal article" date="2008" name="J. Biol. Chem.">
        <title>Systematic structure-activity analysis of microcin J25.</title>
        <authorList>
            <person name="Pavlova O."/>
            <person name="Mukhopadhyay J."/>
            <person name="Sineva E."/>
            <person name="Ebright R.H."/>
            <person name="Severinov K."/>
        </authorList>
    </citation>
    <scope>MUTAGENESIS OF GLY-41; PRO-44; TYR-46; PHE-47; ILE-50; THR-52; PHE-56 AND TYR-57</scope>
</reference>
<reference key="9">
    <citation type="journal article" date="2003" name="J. Am. Chem. Soc.">
        <title>Structure of antibacterial peptide microcin J25: a 21-residue lariat protoknot.</title>
        <authorList>
            <person name="Bayro M.J."/>
            <person name="Mukhopadhyay J."/>
            <person name="Swapna G.V.T."/>
            <person name="Huang J.Y."/>
            <person name="Ma L.-C."/>
            <person name="Sineva E."/>
            <person name="Dawson P.E."/>
            <person name="Montelione G.T."/>
            <person name="Ebright R.H."/>
        </authorList>
    </citation>
    <scope>STRUCTURE BY NMR OF 38-58</scope>
    <scope>IDENTIFICATION BY MASS SPECTROMETRY</scope>
</reference>
<reference key="10">
    <citation type="journal article" date="2003" name="J. Am. Chem. Soc.">
        <title>Microcin J25 has a threaded sidechain-to-backbone ring structure and not a head-to-tail cyclized backbone.</title>
        <authorList>
            <person name="Rosengren K.J."/>
            <person name="Clark R.J."/>
            <person name="Daly N.L."/>
            <person name="Goeransson U."/>
            <person name="Jones A."/>
            <person name="Craik D.J."/>
        </authorList>
    </citation>
    <scope>STRUCTURE BY NMR OF 38-58</scope>
    <scope>CHARACTERIZATION</scope>
    <scope>MASS SPECTROMETRY</scope>
</reference>
<reference key="11">
    <citation type="journal article" date="2003" name="J. Am. Chem. Soc.">
        <title>Structure of microcin J25, a peptide inhibitor of bacterial RNA polymerase, is a lassoed tail.</title>
        <authorList>
            <person name="Wilson K.-A."/>
            <person name="Kalkum M."/>
            <person name="Ottesen J."/>
            <person name="Yuzenkova J."/>
            <person name="Chait B.T."/>
            <person name="Landick R."/>
            <person name="Muir T."/>
            <person name="Severinov K."/>
            <person name="Darst S.A."/>
        </authorList>
    </citation>
    <scope>STRUCTURE BY NMR OF 38-58</scope>
    <scope>IDENTIFICATION BY MASS SPECTROMETRY</scope>
</reference>
<reference key="12">
    <citation type="journal article" date="2019" name="Proc. Natl. Acad. Sci. U.S.A.">
        <title>Structural mechanism of transcription inhibition by lasso peptides microcin J25 and capistruin.</title>
        <authorList>
            <person name="Braffman N.R."/>
            <person name="Piscotta F.J."/>
            <person name="Hauver J."/>
            <person name="Campbell E.A."/>
            <person name="Link A.J."/>
            <person name="Darst S.A."/>
        </authorList>
    </citation>
    <scope>X-RAY CRYSTALLOGRAPHY (3.68 ANGSTROMS) OF 38-58 IN COMPLEX WITH E.COLI RNA POLYMERASE</scope>
    <scope>FUNCTION</scope>
</reference>
<evidence type="ECO:0000269" key="1">
    <source>
    </source>
</evidence>
<evidence type="ECO:0000269" key="2">
    <source>
    </source>
</evidence>
<evidence type="ECO:0000269" key="3">
    <source>
    </source>
</evidence>
<evidence type="ECO:0000269" key="4">
    <source>
    </source>
</evidence>
<evidence type="ECO:0000269" key="5">
    <source>
    </source>
</evidence>
<evidence type="ECO:0000269" key="6">
    <source>
    </source>
</evidence>
<evidence type="ECO:0000269" key="7">
    <source>
    </source>
</evidence>
<evidence type="ECO:0000269" key="8">
    <source>
    </source>
</evidence>
<evidence type="ECO:0000269" key="9">
    <source>
    </source>
</evidence>
<evidence type="ECO:0000269" key="10">
    <source>
    </source>
</evidence>
<evidence type="ECO:0000269" key="11">
    <source>
    </source>
</evidence>
<evidence type="ECO:0000303" key="12">
    <source>
    </source>
</evidence>
<evidence type="ECO:0000303" key="13">
    <source>
    </source>
</evidence>
<evidence type="ECO:0000305" key="14">
    <source>
    </source>
</evidence>
<evidence type="ECO:0000305" key="15">
    <source>
    </source>
</evidence>
<evidence type="ECO:0007829" key="16">
    <source>
        <dbReference type="PDB" id="1PP5"/>
    </source>
</evidence>
<evidence type="ECO:0007829" key="17">
    <source>
        <dbReference type="PDB" id="4CU4"/>
    </source>
</evidence>
<proteinExistence type="evidence at protein level"/>
<geneLocation type="plasmid">
    <name>pTUC100</name>
</geneLocation>